<feature type="chain" id="PRO_0000054346" description="Alpha-1,4-glucan:maltose-1-phosphate maltosyltransferase">
    <location>
        <begin position="1"/>
        <end position="697"/>
    </location>
</feature>
<feature type="region of interest" description="Disordered" evidence="2">
    <location>
        <begin position="286"/>
        <end position="305"/>
    </location>
</feature>
<feature type="active site" description="Nucleophile" evidence="1">
    <location>
        <position position="414"/>
    </location>
</feature>
<feature type="active site" description="Proton donor" evidence="1">
    <location>
        <position position="443"/>
    </location>
</feature>
<feature type="binding site" evidence="1">
    <location>
        <position position="284"/>
    </location>
    <ligand>
        <name>alpha-maltose 1-phosphate</name>
        <dbReference type="ChEBI" id="CHEBI:63576"/>
    </ligand>
</feature>
<feature type="binding site" evidence="1">
    <location>
        <position position="344"/>
    </location>
    <ligand>
        <name>alpha-maltose 1-phosphate</name>
        <dbReference type="ChEBI" id="CHEBI:63576"/>
    </ligand>
</feature>
<feature type="binding site" evidence="1">
    <location>
        <position position="379"/>
    </location>
    <ligand>
        <name>alpha-maltose 1-phosphate</name>
        <dbReference type="ChEBI" id="CHEBI:63576"/>
    </ligand>
</feature>
<feature type="binding site" evidence="1">
    <location>
        <position position="415"/>
    </location>
    <ligand>
        <name>alpha-maltose 1-phosphate</name>
        <dbReference type="ChEBI" id="CHEBI:63576"/>
    </ligand>
</feature>
<feature type="binding site" evidence="1">
    <location>
        <begin position="553"/>
        <end position="554"/>
    </location>
    <ligand>
        <name>alpha-maltose 1-phosphate</name>
        <dbReference type="ChEBI" id="CHEBI:63576"/>
    </ligand>
</feature>
<feature type="site" description="Transition state stabilizer" evidence="1">
    <location>
        <position position="499"/>
    </location>
</feature>
<feature type="mutagenesis site" description="In SMEG53; results in a temperature-dependent accumulation of M1P during exponential growth." evidence="3">
    <original>H</original>
    <variation>Y</variation>
    <location>
        <position position="349"/>
    </location>
</feature>
<accession>Q9RP48</accession>
<accession>A0R1Y3</accession>
<accession>I7G6B6</accession>
<organism>
    <name type="scientific">Mycolicibacterium smegmatis (strain ATCC 700084 / mc(2)155)</name>
    <name type="common">Mycobacterium smegmatis</name>
    <dbReference type="NCBI Taxonomy" id="246196"/>
    <lineage>
        <taxon>Bacteria</taxon>
        <taxon>Bacillati</taxon>
        <taxon>Actinomycetota</taxon>
        <taxon>Actinomycetes</taxon>
        <taxon>Mycobacteriales</taxon>
        <taxon>Mycobacteriaceae</taxon>
        <taxon>Mycolicibacterium</taxon>
    </lineage>
</organism>
<name>GLGE_MYCS2</name>
<dbReference type="EC" id="2.4.99.16"/>
<dbReference type="EMBL" id="AF172946">
    <property type="protein sequence ID" value="AAF07898.1"/>
    <property type="molecule type" value="Genomic_DNA"/>
</dbReference>
<dbReference type="EMBL" id="CP000480">
    <property type="protein sequence ID" value="ABK71468.1"/>
    <property type="status" value="ALT_INIT"/>
    <property type="molecule type" value="Genomic_DNA"/>
</dbReference>
<dbReference type="EMBL" id="CP001663">
    <property type="protein sequence ID" value="AFP41237.1"/>
    <property type="molecule type" value="Genomic_DNA"/>
</dbReference>
<dbReference type="RefSeq" id="YP_889171.1">
    <property type="nucleotide sequence ID" value="NC_008596.1"/>
</dbReference>
<dbReference type="SMR" id="Q9RP48"/>
<dbReference type="STRING" id="246196.MSMEG_4916"/>
<dbReference type="CAZy" id="GH13">
    <property type="family name" value="Glycoside Hydrolase Family 13"/>
</dbReference>
<dbReference type="PaxDb" id="246196-MSMEI_4789"/>
<dbReference type="KEGG" id="msg:MSMEI_4789"/>
<dbReference type="KEGG" id="msm:MSMEG_4916"/>
<dbReference type="PATRIC" id="fig|246196.19.peg.4797"/>
<dbReference type="eggNOG" id="COG0366">
    <property type="taxonomic scope" value="Bacteria"/>
</dbReference>
<dbReference type="OrthoDB" id="9805159at2"/>
<dbReference type="BRENDA" id="2.4.99.16">
    <property type="organism ID" value="3512"/>
</dbReference>
<dbReference type="UniPathway" id="UPA00164"/>
<dbReference type="Proteomes" id="UP000000757">
    <property type="component" value="Chromosome"/>
</dbReference>
<dbReference type="Proteomes" id="UP000006158">
    <property type="component" value="Chromosome"/>
</dbReference>
<dbReference type="GO" id="GO:0016758">
    <property type="term" value="F:hexosyltransferase activity"/>
    <property type="evidence" value="ECO:0007669"/>
    <property type="project" value="UniProtKB-UniRule"/>
</dbReference>
<dbReference type="GO" id="GO:0004553">
    <property type="term" value="F:hydrolase activity, hydrolyzing O-glycosyl compounds"/>
    <property type="evidence" value="ECO:0007669"/>
    <property type="project" value="InterPro"/>
</dbReference>
<dbReference type="GO" id="GO:0030979">
    <property type="term" value="P:alpha-glucan biosynthetic process"/>
    <property type="evidence" value="ECO:0007669"/>
    <property type="project" value="UniProtKB-UniRule"/>
</dbReference>
<dbReference type="GO" id="GO:0005978">
    <property type="term" value="P:glycogen biosynthetic process"/>
    <property type="evidence" value="ECO:0007669"/>
    <property type="project" value="UniProtKB-UniPathway"/>
</dbReference>
<dbReference type="CDD" id="cd11344">
    <property type="entry name" value="AmyAc_GlgE_like"/>
    <property type="match status" value="1"/>
</dbReference>
<dbReference type="Gene3D" id="3.20.20.80">
    <property type="entry name" value="Glycosidases"/>
    <property type="match status" value="1"/>
</dbReference>
<dbReference type="Gene3D" id="2.60.40.1180">
    <property type="entry name" value="Golgi alpha-mannosidase II"/>
    <property type="match status" value="1"/>
</dbReference>
<dbReference type="Gene3D" id="2.60.40.10">
    <property type="entry name" value="Immunoglobulins"/>
    <property type="match status" value="1"/>
</dbReference>
<dbReference type="Gene3D" id="1.20.58.80">
    <property type="entry name" value="Phosphotransferase system, lactose/cellobiose-type IIA subunit"/>
    <property type="match status" value="1"/>
</dbReference>
<dbReference type="HAMAP" id="MF_02124">
    <property type="entry name" value="GlgE"/>
    <property type="match status" value="1"/>
</dbReference>
<dbReference type="InterPro" id="IPR026585">
    <property type="entry name" value="GlgE"/>
</dbReference>
<dbReference type="InterPro" id="IPR049171">
    <property type="entry name" value="GLGE_C"/>
</dbReference>
<dbReference type="InterPro" id="IPR021828">
    <property type="entry name" value="GlgE_dom_N/S"/>
</dbReference>
<dbReference type="InterPro" id="IPR006047">
    <property type="entry name" value="Glyco_hydro_13_cat_dom"/>
</dbReference>
<dbReference type="InterPro" id="IPR013780">
    <property type="entry name" value="Glyco_hydro_b"/>
</dbReference>
<dbReference type="InterPro" id="IPR017853">
    <property type="entry name" value="Glycoside_hydrolase_SF"/>
</dbReference>
<dbReference type="InterPro" id="IPR013783">
    <property type="entry name" value="Ig-like_fold"/>
</dbReference>
<dbReference type="PANTHER" id="PTHR47786">
    <property type="entry name" value="ALPHA-1,4-GLUCAN:MALTOSE-1-PHOSPHATE MALTOSYLTRANSFERASE"/>
    <property type="match status" value="1"/>
</dbReference>
<dbReference type="PANTHER" id="PTHR47786:SF2">
    <property type="entry name" value="GLYCOSYL HYDROLASE FAMILY 13 CATALYTIC DOMAIN-CONTAINING PROTEIN"/>
    <property type="match status" value="1"/>
</dbReference>
<dbReference type="Pfam" id="PF21702">
    <property type="entry name" value="GLGE_C"/>
    <property type="match status" value="1"/>
</dbReference>
<dbReference type="Pfam" id="PF11896">
    <property type="entry name" value="GlgE_dom_N_S"/>
    <property type="match status" value="1"/>
</dbReference>
<dbReference type="SMART" id="SM00642">
    <property type="entry name" value="Aamy"/>
    <property type="match status" value="1"/>
</dbReference>
<dbReference type="SUPFAM" id="SSF51445">
    <property type="entry name" value="(Trans)glycosidases"/>
    <property type="match status" value="1"/>
</dbReference>
<gene>
    <name type="primary">glgE</name>
    <name type="ordered locus">MSMEG_4916</name>
    <name type="ordered locus">MSMEI_4789</name>
</gene>
<protein>
    <recommendedName>
        <fullName>Alpha-1,4-glucan:maltose-1-phosphate maltosyltransferase</fullName>
        <shortName>GMPMT</shortName>
        <ecNumber>2.4.99.16</ecNumber>
    </recommendedName>
    <alternativeName>
        <fullName>(1-&gt;4)-alpha-D-glucan:maltose-1-phosphate alpha-D-maltosyltransferase</fullName>
    </alternativeName>
</protein>
<keyword id="KW-0119">Carbohydrate metabolism</keyword>
<keyword id="KW-0320">Glycogen biosynthesis</keyword>
<keyword id="KW-0321">Glycogen metabolism</keyword>
<keyword id="KW-0328">Glycosyltransferase</keyword>
<keyword id="KW-1185">Reference proteome</keyword>
<keyword id="KW-0808">Transferase</keyword>
<evidence type="ECO:0000250" key="1"/>
<evidence type="ECO:0000256" key="2">
    <source>
        <dbReference type="SAM" id="MobiDB-lite"/>
    </source>
</evidence>
<evidence type="ECO:0000269" key="3">
    <source>
    </source>
</evidence>
<evidence type="ECO:0000269" key="4">
    <source>
    </source>
</evidence>
<evidence type="ECO:0000269" key="5">
    <source>
    </source>
</evidence>
<evidence type="ECO:0000269" key="6">
    <source>
    </source>
</evidence>
<evidence type="ECO:0000305" key="7"/>
<sequence>MRSGWVAGRIGIDDVAPVVSCGRYPAKAVVGEVVPVRATVWREGHDAVSATLVVRYLGTEFPRLASGPGTTPPAVPLGTVVQPGKRVKPQILQMSKGRTPDVFHGEFTPDAVGLWTFRVDGWGDPIATWRHAVEAKLEAGQSETELNNDLLVGARLLMRAAEGVPRKLRDPLLEAAQQLRTPGDPYQRAGGALSPEVADLLLQYPLREFVTRGEVHGVWVDRPLARFSSWYEMFPRSTGGWDENGHPVHGTFATAAAALPRIARMGFNVVYLPPIHPIGKVHRKGRNNSVTAAPGDVGSPWAIGSDEGGHDAVHPDLGTIDDFDAFVAAARDAGLEVALDLALQCAPDHPWAKEHPEWFTVLPDGTIAYAENPPKKYQDIYPLNFDNDPDGLFHEVLRVVKFWISHGVKVFRVDNPHTKPPNFWAWLIAEVKNEDPDILFLSEAFTRPARLYGLAKLGFTQSYTYFTWRTAKWELTEFGEEIAKYADHARPNLWVNTPDILHESLQHGGPGMFAIRAVLASTMSSSWGVYSGYELFEHRSVREGSEEYLDSEKYELRPRDFDGALARGESLEPFLTRLNEIRRLHPALRQLRTIKFHHLDNDALLAYSKFDPVTGDTVLVVVTLNPFGPEESTLWLDMEALGMEPYDRFWVRDEITGEEYQWGQSNYVRIEPAKAVAHVLNMPLIPYEKRLDLLRRE</sequence>
<comment type="function">
    <text evidence="4">Maltosyltransferase that uses maltose 1-phosphate (M1P) as the sugar donor to elongate linear or branched alpha-(1-&gt;4)-glucans. Is also able to catalyze the reverse reaction in vitro. Cannot use glucose 1-phosphate as substrate. Is involved in a branched alpha-glucan biosynthetic pathway from trehalose, together with TreS, Mak and GlgB.</text>
</comment>
<comment type="catalytic activity">
    <reaction evidence="4">
        <text>alpha-maltose 1-phosphate + [(1-&gt;4)-alpha-D-glucosyl](n) = [(1-&gt;4)-alpha-D-glucosyl](n+2) + phosphate</text>
        <dbReference type="Rhea" id="RHEA:42692"/>
        <dbReference type="Rhea" id="RHEA-COMP:9584"/>
        <dbReference type="Rhea" id="RHEA-COMP:10183"/>
        <dbReference type="ChEBI" id="CHEBI:15444"/>
        <dbReference type="ChEBI" id="CHEBI:43474"/>
        <dbReference type="ChEBI" id="CHEBI:63576"/>
        <dbReference type="EC" id="2.4.99.16"/>
    </reaction>
</comment>
<comment type="activity regulation">
    <text evidence="4">The transfer reaction from maltose-1-P to glycogen is inhibited by micromolar amounts of inorganic phosphate or arsenate but is only slightly inhibited by millimolar concentrations of glucose-1-P, glucose-6-P, or inorganic pyrophosphate. Is also inhibited by ATP, by 1,4-dideoxy-1,4-imino-D-arabinitol (DIA), but not by isofagomine.</text>
</comment>
<comment type="biophysicochemical properties">
    <kinetics>
        <KM evidence="4">250 uM for maltose 1-phosphate</KM>
        <Vmax evidence="4">25.2 nmol/min/mg enzyme</Vmax>
        <text>The data are not very reliable because measures were done with a partially purified enzyme.</text>
    </kinetics>
</comment>
<comment type="pathway">
    <text evidence="4">Glycan biosynthesis; glycogen biosynthesis.</text>
</comment>
<comment type="subunit">
    <text evidence="6">Homodimer.</text>
</comment>
<comment type="disruption phenotype">
    <text evidence="5">Cells lacking this gene display M1P accumulation and trehalose sensitivity. These phenotypes are suppressed in mutants lacking both glgE and treS or both glgE and mak. Deletion of glgE does not increase glycogen content.</text>
</comment>
<comment type="similarity">
    <text evidence="7">Belongs to the glycosyl hydrolase 13 family. GlgE subfamily.</text>
</comment>
<comment type="sequence caution" evidence="7">
    <conflict type="erroneous initiation">
        <sequence resource="EMBL-CDS" id="ABK71468"/>
    </conflict>
    <text>Truncated N-terminus.</text>
</comment>
<proteinExistence type="evidence at protein level"/>
<reference key="1">
    <citation type="journal article" date="1999" name="J. Bacteriol.">
        <title>Exponential-phase glycogen recycling is essential for growth of Mycobacterium smegmatis.</title>
        <authorList>
            <person name="Belanger A.E."/>
            <person name="Hatfull G.F."/>
        </authorList>
    </citation>
    <scope>NUCLEOTIDE SEQUENCE [GENOMIC DNA]</scope>
    <scope>MUTAGENESIS OF HIS-349</scope>
</reference>
<reference key="2">
    <citation type="submission" date="2006-10" db="EMBL/GenBank/DDBJ databases">
        <authorList>
            <person name="Fleischmann R.D."/>
            <person name="Dodson R.J."/>
            <person name="Haft D.H."/>
            <person name="Merkel J.S."/>
            <person name="Nelson W.C."/>
            <person name="Fraser C.M."/>
        </authorList>
    </citation>
    <scope>NUCLEOTIDE SEQUENCE [LARGE SCALE GENOMIC DNA]</scope>
    <source>
        <strain>ATCC 700084 / mc(2)155</strain>
    </source>
</reference>
<reference key="3">
    <citation type="journal article" date="2007" name="Genome Biol.">
        <title>Interrupted coding sequences in Mycobacterium smegmatis: authentic mutations or sequencing errors?</title>
        <authorList>
            <person name="Deshayes C."/>
            <person name="Perrodou E."/>
            <person name="Gallien S."/>
            <person name="Euphrasie D."/>
            <person name="Schaeffer C."/>
            <person name="Van-Dorsselaer A."/>
            <person name="Poch O."/>
            <person name="Lecompte O."/>
            <person name="Reyrat J.-M."/>
        </authorList>
    </citation>
    <scope>NUCLEOTIDE SEQUENCE [LARGE SCALE GENOMIC DNA]</scope>
    <source>
        <strain>ATCC 700084 / mc(2)155</strain>
    </source>
</reference>
<reference key="4">
    <citation type="journal article" date="2009" name="Genome Res.">
        <title>Ortho-proteogenomics: multiple proteomes investigation through orthology and a new MS-based protocol.</title>
        <authorList>
            <person name="Gallien S."/>
            <person name="Perrodou E."/>
            <person name="Carapito C."/>
            <person name="Deshayes C."/>
            <person name="Reyrat J.-M."/>
            <person name="Van Dorsselaer A."/>
            <person name="Poch O."/>
            <person name="Schaeffer C."/>
            <person name="Lecompte O."/>
        </authorList>
    </citation>
    <scope>NUCLEOTIDE SEQUENCE [LARGE SCALE GENOMIC DNA]</scope>
    <source>
        <strain>ATCC 700084 / mc(2)155</strain>
    </source>
</reference>
<reference key="5">
    <citation type="journal article" date="2010" name="J. Biol. Chem.">
        <title>Last step in the conversion of trehalose to glycogen: a mycobacterial enzyme that transfers maltose from maltose 1-phosphate to glycogen.</title>
        <authorList>
            <person name="Elbein A.D."/>
            <person name="Pastuszak I."/>
            <person name="Tackett A.J."/>
            <person name="Wilson T."/>
            <person name="Pan Y.T."/>
        </authorList>
    </citation>
    <scope>FUNCTION</scope>
    <scope>CATALYTIC ACTIVITY</scope>
    <scope>SUBSTRATE SPECIFICITY</scope>
    <scope>ACTIVITY REGULATION</scope>
    <scope>KINETIC PARAMETERS</scope>
    <scope>PATHWAY</scope>
    <source>
        <strain>ATCC 14468 / DSM 43277 / NCIB 9953 / NCTC 10265 / W-113</strain>
    </source>
</reference>
<reference key="6">
    <citation type="journal article" date="2010" name="Nat. Chem. Biol.">
        <title>Self-poisoning of Mycobacterium tuberculosis by targeting GlgE in an alpha-glucan pathway.</title>
        <authorList>
            <person name="Kalscheuer R."/>
            <person name="Syson K."/>
            <person name="Veeraraghavan U."/>
            <person name="Weinrick B."/>
            <person name="Biermann K.E."/>
            <person name="Liu Z."/>
            <person name="Sacchettini J.C."/>
            <person name="Besra G."/>
            <person name="Bornemann S."/>
            <person name="Jacobs W.R. Jr."/>
        </authorList>
    </citation>
    <scope>DISRUPTION PHENOTYPE</scope>
    <scope>DISCUSSION OF MUTANT TYR-349 PHENOTYPE</scope>
    <source>
        <strain>ATCC 700084 / mc(2)155</strain>
    </source>
</reference>
<reference key="7">
    <citation type="journal article" date="2011" name="J. Biol. Chem.">
        <title>Structure of a Streptomyces maltosyltransferase GlgE: a homologue of a genetically validated anti-tuberculosis target.</title>
        <authorList>
            <person name="Syson K."/>
            <person name="Stevenson C.E."/>
            <person name="Rejzek M."/>
            <person name="Fairhurst S.A."/>
            <person name="Nair A."/>
            <person name="Bruton C.J."/>
            <person name="Field R.A."/>
            <person name="Chater K.F."/>
            <person name="Lawson D.M."/>
            <person name="Bornemann S."/>
        </authorList>
    </citation>
    <scope>SUBUNIT</scope>
    <source>
        <strain>ATCC 700084 / mc(2)155</strain>
    </source>
</reference>